<evidence type="ECO:0000250" key="1">
    <source>
        <dbReference type="UniProtKB" id="P77257"/>
    </source>
</evidence>
<evidence type="ECO:0000255" key="2">
    <source>
        <dbReference type="PROSITE-ProRule" id="PRU00434"/>
    </source>
</evidence>
<evidence type="ECO:0000305" key="3"/>
<accession>Q83L12</accession>
<accession>Q7C1J2</accession>
<feature type="chain" id="PRO_0000351305" description="Autoinducer 2 import ATP-binding protein LsrA">
    <location>
        <begin position="1"/>
        <end position="511"/>
    </location>
</feature>
<feature type="domain" description="ABC transporter 1" evidence="2">
    <location>
        <begin position="12"/>
        <end position="240"/>
    </location>
</feature>
<feature type="domain" description="ABC transporter 2" evidence="2">
    <location>
        <begin position="264"/>
        <end position="503"/>
    </location>
</feature>
<feature type="binding site" evidence="2">
    <location>
        <begin position="44"/>
        <end position="51"/>
    </location>
    <ligand>
        <name>ATP</name>
        <dbReference type="ChEBI" id="CHEBI:30616"/>
    </ligand>
</feature>
<organism>
    <name type="scientific">Shigella flexneri</name>
    <dbReference type="NCBI Taxonomy" id="623"/>
    <lineage>
        <taxon>Bacteria</taxon>
        <taxon>Pseudomonadati</taxon>
        <taxon>Pseudomonadota</taxon>
        <taxon>Gammaproteobacteria</taxon>
        <taxon>Enterobacterales</taxon>
        <taxon>Enterobacteriaceae</taxon>
        <taxon>Shigella</taxon>
    </lineage>
</organism>
<reference key="1">
    <citation type="journal article" date="2002" name="Nucleic Acids Res.">
        <title>Genome sequence of Shigella flexneri 2a: insights into pathogenicity through comparison with genomes of Escherichia coli K12 and O157.</title>
        <authorList>
            <person name="Jin Q."/>
            <person name="Yuan Z."/>
            <person name="Xu J."/>
            <person name="Wang Y."/>
            <person name="Shen Y."/>
            <person name="Lu W."/>
            <person name="Wang J."/>
            <person name="Liu H."/>
            <person name="Yang J."/>
            <person name="Yang F."/>
            <person name="Zhang X."/>
            <person name="Zhang J."/>
            <person name="Yang G."/>
            <person name="Wu H."/>
            <person name="Qu D."/>
            <person name="Dong J."/>
            <person name="Sun L."/>
            <person name="Xue Y."/>
            <person name="Zhao A."/>
            <person name="Gao Y."/>
            <person name="Zhu J."/>
            <person name="Kan B."/>
            <person name="Ding K."/>
            <person name="Chen S."/>
            <person name="Cheng H."/>
            <person name="Yao Z."/>
            <person name="He B."/>
            <person name="Chen R."/>
            <person name="Ma D."/>
            <person name="Qiang B."/>
            <person name="Wen Y."/>
            <person name="Hou Y."/>
            <person name="Yu J."/>
        </authorList>
    </citation>
    <scope>NUCLEOTIDE SEQUENCE [LARGE SCALE GENOMIC DNA]</scope>
    <source>
        <strain>301 / Serotype 2a</strain>
    </source>
</reference>
<reference key="2">
    <citation type="journal article" date="2003" name="Infect. Immun.">
        <title>Complete genome sequence and comparative genomics of Shigella flexneri serotype 2a strain 2457T.</title>
        <authorList>
            <person name="Wei J."/>
            <person name="Goldberg M.B."/>
            <person name="Burland V."/>
            <person name="Venkatesan M.M."/>
            <person name="Deng W."/>
            <person name="Fournier G."/>
            <person name="Mayhew G.F."/>
            <person name="Plunkett G. III"/>
            <person name="Rose D.J."/>
            <person name="Darling A."/>
            <person name="Mau B."/>
            <person name="Perna N.T."/>
            <person name="Payne S.M."/>
            <person name="Runyen-Janecky L.J."/>
            <person name="Zhou S."/>
            <person name="Schwartz D.C."/>
            <person name="Blattner F.R."/>
        </authorList>
    </citation>
    <scope>NUCLEOTIDE SEQUENCE [LARGE SCALE GENOMIC DNA]</scope>
    <source>
        <strain>ATCC 700930 / 2457T / Serotype 2a</strain>
    </source>
</reference>
<proteinExistence type="inferred from homology"/>
<comment type="function">
    <text evidence="1">Part of the ABC transporter complex LsrABCD involved in autoinducer 2 (AI-2) import. Responsible for energy coupling to the transport system.</text>
</comment>
<comment type="catalytic activity">
    <reaction evidence="1">
        <text>ATP + H2O + (2R,4S)-2-methyl-2,3,3,4-tetrahydroxytetrahydrofuran-[AI-2-binding protein]Side 1 = ADP + phosphate + (2R,4S)-2-methyl-2,3,3,4-tetrahydroxytetrahydrofuranSide 2 + [AI-2-binding protein]Side 1.</text>
        <dbReference type="EC" id="7.6.2.13"/>
    </reaction>
</comment>
<comment type="subunit">
    <text evidence="1">The complex is composed of two ATP-binding proteins (LsrA), two transmembrane proteins (LsrC and LsrD) and a solute-binding protein (LsrB).</text>
</comment>
<comment type="subcellular location">
    <subcellularLocation>
        <location evidence="1">Cell inner membrane</location>
        <topology evidence="1">Peripheral membrane protein</topology>
    </subcellularLocation>
</comment>
<comment type="similarity">
    <text evidence="3">Belongs to the ABC transporter superfamily. AI-2 autoinducer porter (TC 3.A.1.2.8) family.</text>
</comment>
<protein>
    <recommendedName>
        <fullName evidence="1">Autoinducer 2 import ATP-binding protein LsrA</fullName>
        <shortName evidence="1">AI-2 import ATP-binding protein LsrA</shortName>
        <ecNumber evidence="1">7.6.2.13</ecNumber>
    </recommendedName>
</protein>
<sequence length="511" mass="55731">MQTSDTRALPLLCARSVYKQYSGVNVLKGIDFTLHQGEVHALLGGNGAGKSTLMKIIAGITPADSGTLEIGGNNYARLTPVHAHQLGIYLVPQEPLLFPSLSIKENILFGLAKKQLSMQKMKNLLAALGCQFDLHSLAGSLDVADRQMVEILRGLMRDSRILILDEPTASLTPAETERLFSRLQELLATGVGIVFISHKLPEIRQIADRISVMRDGTIALSGKTSELSTDDIIQAITPAVREKSLSASQKLWLELPGNRPQHAVGTPVLTLENLTGEGFRNVSLTLNAGEILGLAGLVGAGRTELAETLYGLRTLRGGRIMLNGKEINKLSTGERLLRGLVYLPEDRQSSGLNLDASLAWNVCALTHNLRGFWAKTAKDNATLERYRRALNIKFNQPEQAARTLSGSNQQKILIAKCLEASPQALIVDEPTRGVDVSARNDIYQLLRSIAAQNVAVLFISSDMEEIELMADRVYVMHQGEITHSALTGRDINVETIMRVAFGDSQRQEASC</sequence>
<name>LSRA_SHIFL</name>
<dbReference type="EC" id="7.6.2.13" evidence="1"/>
<dbReference type="EMBL" id="AE005674">
    <property type="protein sequence ID" value="AAN43170.1"/>
    <property type="molecule type" value="Genomic_DNA"/>
</dbReference>
<dbReference type="EMBL" id="AE014073">
    <property type="protein sequence ID" value="AAP17062.1"/>
    <property type="molecule type" value="Genomic_DNA"/>
</dbReference>
<dbReference type="RefSeq" id="NP_707463.1">
    <property type="nucleotide sequence ID" value="NC_004337.2"/>
</dbReference>
<dbReference type="RefSeq" id="WP_001194865.1">
    <property type="nucleotide sequence ID" value="NZ_WPGW01000160.1"/>
</dbReference>
<dbReference type="SMR" id="Q83L12"/>
<dbReference type="STRING" id="198214.SF1583"/>
<dbReference type="PaxDb" id="198214-SF1583"/>
<dbReference type="GeneID" id="1024806"/>
<dbReference type="KEGG" id="sfl:SF1583"/>
<dbReference type="KEGG" id="sfx:S1709"/>
<dbReference type="PATRIC" id="fig|198214.7.peg.1872"/>
<dbReference type="HOGENOM" id="CLU_000604_92_3_6"/>
<dbReference type="Proteomes" id="UP000001006">
    <property type="component" value="Chromosome"/>
</dbReference>
<dbReference type="Proteomes" id="UP000002673">
    <property type="component" value="Chromosome"/>
</dbReference>
<dbReference type="GO" id="GO:0005886">
    <property type="term" value="C:plasma membrane"/>
    <property type="evidence" value="ECO:0007669"/>
    <property type="project" value="UniProtKB-SubCell"/>
</dbReference>
<dbReference type="GO" id="GO:0005524">
    <property type="term" value="F:ATP binding"/>
    <property type="evidence" value="ECO:0007669"/>
    <property type="project" value="UniProtKB-KW"/>
</dbReference>
<dbReference type="GO" id="GO:0016887">
    <property type="term" value="F:ATP hydrolysis activity"/>
    <property type="evidence" value="ECO:0007669"/>
    <property type="project" value="InterPro"/>
</dbReference>
<dbReference type="CDD" id="cd03216">
    <property type="entry name" value="ABC_Carb_Monos_I"/>
    <property type="match status" value="1"/>
</dbReference>
<dbReference type="CDD" id="cd03215">
    <property type="entry name" value="ABC_Carb_Monos_II"/>
    <property type="match status" value="1"/>
</dbReference>
<dbReference type="Gene3D" id="3.40.50.300">
    <property type="entry name" value="P-loop containing nucleotide triphosphate hydrolases"/>
    <property type="match status" value="2"/>
</dbReference>
<dbReference type="InterPro" id="IPR003593">
    <property type="entry name" value="AAA+_ATPase"/>
</dbReference>
<dbReference type="InterPro" id="IPR050107">
    <property type="entry name" value="ABC_carbohydrate_import_ATPase"/>
</dbReference>
<dbReference type="InterPro" id="IPR003439">
    <property type="entry name" value="ABC_transporter-like_ATP-bd"/>
</dbReference>
<dbReference type="InterPro" id="IPR027417">
    <property type="entry name" value="P-loop_NTPase"/>
</dbReference>
<dbReference type="NCBIfam" id="NF011967">
    <property type="entry name" value="PRK15439.1"/>
    <property type="match status" value="1"/>
</dbReference>
<dbReference type="PANTHER" id="PTHR43790:SF2">
    <property type="entry name" value="AUTOINDUCER 2 IMPORT ATP-BINDING PROTEIN LSRA"/>
    <property type="match status" value="1"/>
</dbReference>
<dbReference type="PANTHER" id="PTHR43790">
    <property type="entry name" value="CARBOHYDRATE TRANSPORT ATP-BINDING PROTEIN MG119-RELATED"/>
    <property type="match status" value="1"/>
</dbReference>
<dbReference type="Pfam" id="PF00005">
    <property type="entry name" value="ABC_tran"/>
    <property type="match status" value="2"/>
</dbReference>
<dbReference type="SMART" id="SM00382">
    <property type="entry name" value="AAA"/>
    <property type="match status" value="2"/>
</dbReference>
<dbReference type="SUPFAM" id="SSF52540">
    <property type="entry name" value="P-loop containing nucleoside triphosphate hydrolases"/>
    <property type="match status" value="2"/>
</dbReference>
<dbReference type="PROSITE" id="PS50893">
    <property type="entry name" value="ABC_TRANSPORTER_2"/>
    <property type="match status" value="2"/>
</dbReference>
<gene>
    <name type="primary">lsrA</name>
    <name type="ordered locus">SF1583</name>
    <name type="ordered locus">S1709</name>
</gene>
<keyword id="KW-0067">ATP-binding</keyword>
<keyword id="KW-0997">Cell inner membrane</keyword>
<keyword id="KW-1003">Cell membrane</keyword>
<keyword id="KW-0472">Membrane</keyword>
<keyword id="KW-0547">Nucleotide-binding</keyword>
<keyword id="KW-1185">Reference proteome</keyword>
<keyword id="KW-0677">Repeat</keyword>
<keyword id="KW-1278">Translocase</keyword>
<keyword id="KW-0813">Transport</keyword>